<comment type="catalytic activity">
    <reaction>
        <text>L-seryl-[protein] + ATP = O-phospho-L-seryl-[protein] + ADP + H(+)</text>
        <dbReference type="Rhea" id="RHEA:17989"/>
        <dbReference type="Rhea" id="RHEA-COMP:9863"/>
        <dbReference type="Rhea" id="RHEA-COMP:11604"/>
        <dbReference type="ChEBI" id="CHEBI:15378"/>
        <dbReference type="ChEBI" id="CHEBI:29999"/>
        <dbReference type="ChEBI" id="CHEBI:30616"/>
        <dbReference type="ChEBI" id="CHEBI:83421"/>
        <dbReference type="ChEBI" id="CHEBI:456216"/>
        <dbReference type="EC" id="2.7.11.1"/>
    </reaction>
</comment>
<comment type="catalytic activity">
    <reaction>
        <text>L-threonyl-[protein] + ATP = O-phospho-L-threonyl-[protein] + ADP + H(+)</text>
        <dbReference type="Rhea" id="RHEA:46608"/>
        <dbReference type="Rhea" id="RHEA-COMP:11060"/>
        <dbReference type="Rhea" id="RHEA-COMP:11605"/>
        <dbReference type="ChEBI" id="CHEBI:15378"/>
        <dbReference type="ChEBI" id="CHEBI:30013"/>
        <dbReference type="ChEBI" id="CHEBI:30616"/>
        <dbReference type="ChEBI" id="CHEBI:61977"/>
        <dbReference type="ChEBI" id="CHEBI:456216"/>
        <dbReference type="EC" id="2.7.11.1"/>
    </reaction>
</comment>
<comment type="subcellular location">
    <subcellularLocation>
        <location evidence="1">Cell membrane</location>
        <topology evidence="1">Single-pass type I membrane protein</topology>
    </subcellularLocation>
</comment>
<comment type="similarity">
    <text evidence="5">In the C-terminal section; belongs to the protein kinase superfamily. Ser/Thr protein kinase family.</text>
</comment>
<comment type="similarity">
    <text evidence="5">In the N-terminal section; belongs to the leguminous lectin family.</text>
</comment>
<accession>O04533</accession>
<feature type="signal peptide" evidence="2">
    <location>
        <begin position="1"/>
        <end position="23"/>
    </location>
</feature>
<feature type="chain" id="PRO_0000403090" description="Putative L-type lectin-domain containing receptor kinase V.2">
    <location>
        <begin position="24"/>
        <end position="656"/>
    </location>
</feature>
<feature type="topological domain" description="Extracellular" evidence="2">
    <location>
        <begin position="24"/>
        <end position="276"/>
    </location>
</feature>
<feature type="transmembrane region" description="Helical" evidence="2">
    <location>
        <begin position="277"/>
        <end position="297"/>
    </location>
</feature>
<feature type="topological domain" description="Cytoplasmic" evidence="2">
    <location>
        <begin position="298"/>
        <end position="656"/>
    </location>
</feature>
<feature type="domain" description="Protein kinase" evidence="3">
    <location>
        <begin position="334"/>
        <end position="615"/>
    </location>
</feature>
<feature type="region of interest" description="Legume-lectin like">
    <location>
        <begin position="29"/>
        <end position="248"/>
    </location>
</feature>
<feature type="active site" description="Proton acceptor" evidence="3 4">
    <location>
        <position position="459"/>
    </location>
</feature>
<feature type="binding site" evidence="3">
    <location>
        <begin position="340"/>
        <end position="348"/>
    </location>
    <ligand>
        <name>ATP</name>
        <dbReference type="ChEBI" id="CHEBI:30616"/>
    </ligand>
</feature>
<feature type="binding site" evidence="3">
    <location>
        <position position="363"/>
    </location>
    <ligand>
        <name>ATP</name>
        <dbReference type="ChEBI" id="CHEBI:30616"/>
    </ligand>
</feature>
<feature type="glycosylation site" description="N-linked (GlcNAc...) asparagine" evidence="2">
    <location>
        <position position="78"/>
    </location>
</feature>
<feature type="glycosylation site" description="N-linked (GlcNAc...) asparagine" evidence="2">
    <location>
        <position position="124"/>
    </location>
</feature>
<feature type="glycosylation site" description="N-linked (GlcNAc...) asparagine" evidence="2">
    <location>
        <position position="159"/>
    </location>
</feature>
<feature type="glycosylation site" description="N-linked (GlcNAc...) asparagine" evidence="2">
    <location>
        <position position="190"/>
    </location>
</feature>
<feature type="glycosylation site" description="N-linked (GlcNAc...) asparagine" evidence="2">
    <location>
        <position position="257"/>
    </location>
</feature>
<gene>
    <name type="primary">LECRK52</name>
    <name type="synonym">LECRKB1</name>
    <name type="ordered locus">At1g70130</name>
    <name type="ORF">F20P5.15</name>
</gene>
<organism>
    <name type="scientific">Arabidopsis thaliana</name>
    <name type="common">Mouse-ear cress</name>
    <dbReference type="NCBI Taxonomy" id="3702"/>
    <lineage>
        <taxon>Eukaryota</taxon>
        <taxon>Viridiplantae</taxon>
        <taxon>Streptophyta</taxon>
        <taxon>Embryophyta</taxon>
        <taxon>Tracheophyta</taxon>
        <taxon>Spermatophyta</taxon>
        <taxon>Magnoliopsida</taxon>
        <taxon>eudicotyledons</taxon>
        <taxon>Gunneridae</taxon>
        <taxon>Pentapetalae</taxon>
        <taxon>rosids</taxon>
        <taxon>malvids</taxon>
        <taxon>Brassicales</taxon>
        <taxon>Brassicaceae</taxon>
        <taxon>Camelineae</taxon>
        <taxon>Arabidopsis</taxon>
    </lineage>
</organism>
<keyword id="KW-0067">ATP-binding</keyword>
<keyword id="KW-1003">Cell membrane</keyword>
<keyword id="KW-0325">Glycoprotein</keyword>
<keyword id="KW-0418">Kinase</keyword>
<keyword id="KW-0430">Lectin</keyword>
<keyword id="KW-0472">Membrane</keyword>
<keyword id="KW-0547">Nucleotide-binding</keyword>
<keyword id="KW-0675">Receptor</keyword>
<keyword id="KW-1185">Reference proteome</keyword>
<keyword id="KW-0723">Serine/threonine-protein kinase</keyword>
<keyword id="KW-0732">Signal</keyword>
<keyword id="KW-0808">Transferase</keyword>
<keyword id="KW-0812">Transmembrane</keyword>
<keyword id="KW-1133">Transmembrane helix</keyword>
<evidence type="ECO:0000250" key="1"/>
<evidence type="ECO:0000255" key="2"/>
<evidence type="ECO:0000255" key="3">
    <source>
        <dbReference type="PROSITE-ProRule" id="PRU00159"/>
    </source>
</evidence>
<evidence type="ECO:0000255" key="4">
    <source>
        <dbReference type="PROSITE-ProRule" id="PRU10027"/>
    </source>
</evidence>
<evidence type="ECO:0000305" key="5"/>
<dbReference type="EC" id="2.7.11.1"/>
<dbReference type="EMBL" id="AC002062">
    <property type="protein sequence ID" value="AAB61102.1"/>
    <property type="molecule type" value="Genomic_DNA"/>
</dbReference>
<dbReference type="EMBL" id="CP002684">
    <property type="protein sequence ID" value="AEE35023.1"/>
    <property type="molecule type" value="Genomic_DNA"/>
</dbReference>
<dbReference type="PIR" id="A96724">
    <property type="entry name" value="A96724"/>
</dbReference>
<dbReference type="RefSeq" id="NP_177170.1">
    <property type="nucleotide sequence ID" value="NM_105681.2"/>
</dbReference>
<dbReference type="SMR" id="O04533"/>
<dbReference type="FunCoup" id="O04533">
    <property type="interactions" value="7"/>
</dbReference>
<dbReference type="STRING" id="3702.O04533"/>
<dbReference type="GlyCosmos" id="O04533">
    <property type="glycosylation" value="5 sites, No reported glycans"/>
</dbReference>
<dbReference type="GlyGen" id="O04533">
    <property type="glycosylation" value="5 sites"/>
</dbReference>
<dbReference type="iPTMnet" id="O04533"/>
<dbReference type="PaxDb" id="3702-AT1G70130.1"/>
<dbReference type="ProteomicsDB" id="238721"/>
<dbReference type="EnsemblPlants" id="AT1G70130.1">
    <property type="protein sequence ID" value="AT1G70130.1"/>
    <property type="gene ID" value="AT1G70130"/>
</dbReference>
<dbReference type="GeneID" id="843349"/>
<dbReference type="Gramene" id="AT1G70130.1">
    <property type="protein sequence ID" value="AT1G70130.1"/>
    <property type="gene ID" value="AT1G70130"/>
</dbReference>
<dbReference type="KEGG" id="ath:AT1G70130"/>
<dbReference type="Araport" id="AT1G70130"/>
<dbReference type="TAIR" id="AT1G70130">
    <property type="gene designation" value="LECRK-V.2"/>
</dbReference>
<dbReference type="eggNOG" id="ENOG502QTAM">
    <property type="taxonomic scope" value="Eukaryota"/>
</dbReference>
<dbReference type="HOGENOM" id="CLU_000288_62_3_1"/>
<dbReference type="InParanoid" id="O04533"/>
<dbReference type="OMA" id="QVLYQFP"/>
<dbReference type="PhylomeDB" id="O04533"/>
<dbReference type="PRO" id="PR:O04533"/>
<dbReference type="Proteomes" id="UP000006548">
    <property type="component" value="Chromosome 1"/>
</dbReference>
<dbReference type="ExpressionAtlas" id="O04533">
    <property type="expression patterns" value="baseline and differential"/>
</dbReference>
<dbReference type="GO" id="GO:0005886">
    <property type="term" value="C:plasma membrane"/>
    <property type="evidence" value="ECO:0000250"/>
    <property type="project" value="UniProtKB"/>
</dbReference>
<dbReference type="GO" id="GO:0005524">
    <property type="term" value="F:ATP binding"/>
    <property type="evidence" value="ECO:0007669"/>
    <property type="project" value="UniProtKB-KW"/>
</dbReference>
<dbReference type="GO" id="GO:0030246">
    <property type="term" value="F:carbohydrate binding"/>
    <property type="evidence" value="ECO:0007669"/>
    <property type="project" value="UniProtKB-KW"/>
</dbReference>
<dbReference type="GO" id="GO:0106310">
    <property type="term" value="F:protein serine kinase activity"/>
    <property type="evidence" value="ECO:0007669"/>
    <property type="project" value="RHEA"/>
</dbReference>
<dbReference type="GO" id="GO:0004674">
    <property type="term" value="F:protein serine/threonine kinase activity"/>
    <property type="evidence" value="ECO:0007669"/>
    <property type="project" value="UniProtKB-KW"/>
</dbReference>
<dbReference type="GO" id="GO:0098542">
    <property type="term" value="P:defense response to other organism"/>
    <property type="evidence" value="ECO:0007669"/>
    <property type="project" value="UniProtKB-ARBA"/>
</dbReference>
<dbReference type="CDD" id="cd06899">
    <property type="entry name" value="lectin_legume_LecRK_Arcelin_ConA"/>
    <property type="match status" value="1"/>
</dbReference>
<dbReference type="CDD" id="cd14066">
    <property type="entry name" value="STKc_IRAK"/>
    <property type="match status" value="1"/>
</dbReference>
<dbReference type="FunFam" id="1.10.510.10:FF:000108">
    <property type="entry name" value="L-type lectin-domain containing receptor kinase S.4"/>
    <property type="match status" value="1"/>
</dbReference>
<dbReference type="FunFam" id="3.30.200.20:FF:000112">
    <property type="entry name" value="Lectin-domain containing receptor kinase A4.3"/>
    <property type="match status" value="1"/>
</dbReference>
<dbReference type="Gene3D" id="2.60.120.200">
    <property type="match status" value="1"/>
</dbReference>
<dbReference type="Gene3D" id="3.30.200.20">
    <property type="entry name" value="Phosphorylase Kinase, domain 1"/>
    <property type="match status" value="1"/>
</dbReference>
<dbReference type="Gene3D" id="1.10.510.10">
    <property type="entry name" value="Transferase(Phosphotransferase) domain 1"/>
    <property type="match status" value="1"/>
</dbReference>
<dbReference type="InterPro" id="IPR013320">
    <property type="entry name" value="ConA-like_dom_sf"/>
</dbReference>
<dbReference type="InterPro" id="IPR011009">
    <property type="entry name" value="Kinase-like_dom_sf"/>
</dbReference>
<dbReference type="InterPro" id="IPR050528">
    <property type="entry name" value="L-type_Lectin-RKs"/>
</dbReference>
<dbReference type="InterPro" id="IPR001220">
    <property type="entry name" value="Legume_lectin_dom"/>
</dbReference>
<dbReference type="InterPro" id="IPR000719">
    <property type="entry name" value="Prot_kinase_dom"/>
</dbReference>
<dbReference type="InterPro" id="IPR017441">
    <property type="entry name" value="Protein_kinase_ATP_BS"/>
</dbReference>
<dbReference type="InterPro" id="IPR001245">
    <property type="entry name" value="Ser-Thr/Tyr_kinase_cat_dom"/>
</dbReference>
<dbReference type="InterPro" id="IPR008271">
    <property type="entry name" value="Ser/Thr_kinase_AS"/>
</dbReference>
<dbReference type="PANTHER" id="PTHR27007">
    <property type="match status" value="1"/>
</dbReference>
<dbReference type="Pfam" id="PF00139">
    <property type="entry name" value="Lectin_legB"/>
    <property type="match status" value="1"/>
</dbReference>
<dbReference type="Pfam" id="PF07714">
    <property type="entry name" value="PK_Tyr_Ser-Thr"/>
    <property type="match status" value="1"/>
</dbReference>
<dbReference type="SMART" id="SM00220">
    <property type="entry name" value="S_TKc"/>
    <property type="match status" value="1"/>
</dbReference>
<dbReference type="SUPFAM" id="SSF49899">
    <property type="entry name" value="Concanavalin A-like lectins/glucanases"/>
    <property type="match status" value="1"/>
</dbReference>
<dbReference type="SUPFAM" id="SSF56112">
    <property type="entry name" value="Protein kinase-like (PK-like)"/>
    <property type="match status" value="1"/>
</dbReference>
<dbReference type="PROSITE" id="PS00107">
    <property type="entry name" value="PROTEIN_KINASE_ATP"/>
    <property type="match status" value="1"/>
</dbReference>
<dbReference type="PROSITE" id="PS50011">
    <property type="entry name" value="PROTEIN_KINASE_DOM"/>
    <property type="match status" value="1"/>
</dbReference>
<dbReference type="PROSITE" id="PS00108">
    <property type="entry name" value="PROTEIN_KINASE_ST"/>
    <property type="match status" value="1"/>
</dbReference>
<sequence>MSLLLKMLLFSLFFFYMASISQCSDPTGGQFSFNGYLYTDGVADLNPDGLFKLITSKTQGGAGQVLYQFPLQFKNSPNGTVSSFSTTFVFAIVAVRKTIAGCGLSFNISPTKGLNSVPNIDHSNHSVSVGFHTAKSDKPDGEDVNLVGINIDSSKMDRNCSAGYYKDDGRLVNLDIASGKPIQVWIEYNNSTKQLDVTMHSIKISKPKIPLLSMRKDLSPYLHEYMYIGFTSVGSPTSSHYILGWSFNNKGAVSDINLSRLPKVPDEDQERSLSSKILAISLSISGVTLVIVLILGVMLFLKRKKFLEVIEDWEVQFGPHKFTYKDLFIATKGFKNSEVLGKGGFGKVFKGILPLSSIPIAVKKISHDSRQGMREFLAEIATIGRLRHPDLVRLLGYCRRKGELYLVYDFMPKGSLDKFLYNQPNQILDWSQRFNIIKDVASGLCYLHQQWVQVIIHRDIKPANILLDENMNAKLGDFGLAKLCDHGIDSQTSNVAGTFGYISPELSRTGKSSTSSDVFAFGVFMLEITCGRRPIGPRGSPSEMVLTDWVLDCWDSGDILQVVDEKLGHRYLAEQVTLVLKLGLLCSHPVAATRPSMSSVIQFLDGVATLPHNLLDLVNSRIINEGFDTLGVTTESMEASSNVSLVMTESFLSSGR</sequence>
<name>LRK52_ARATH</name>
<reference key="1">
    <citation type="journal article" date="2000" name="Nature">
        <title>Sequence and analysis of chromosome 1 of the plant Arabidopsis thaliana.</title>
        <authorList>
            <person name="Theologis A."/>
            <person name="Ecker J.R."/>
            <person name="Palm C.J."/>
            <person name="Federspiel N.A."/>
            <person name="Kaul S."/>
            <person name="White O."/>
            <person name="Alonso J."/>
            <person name="Altafi H."/>
            <person name="Araujo R."/>
            <person name="Bowman C.L."/>
            <person name="Brooks S.Y."/>
            <person name="Buehler E."/>
            <person name="Chan A."/>
            <person name="Chao Q."/>
            <person name="Chen H."/>
            <person name="Cheuk R.F."/>
            <person name="Chin C.W."/>
            <person name="Chung M.K."/>
            <person name="Conn L."/>
            <person name="Conway A.B."/>
            <person name="Conway A.R."/>
            <person name="Creasy T.H."/>
            <person name="Dewar K."/>
            <person name="Dunn P."/>
            <person name="Etgu P."/>
            <person name="Feldblyum T.V."/>
            <person name="Feng J.-D."/>
            <person name="Fong B."/>
            <person name="Fujii C.Y."/>
            <person name="Gill J.E."/>
            <person name="Goldsmith A.D."/>
            <person name="Haas B."/>
            <person name="Hansen N.F."/>
            <person name="Hughes B."/>
            <person name="Huizar L."/>
            <person name="Hunter J.L."/>
            <person name="Jenkins J."/>
            <person name="Johnson-Hopson C."/>
            <person name="Khan S."/>
            <person name="Khaykin E."/>
            <person name="Kim C.J."/>
            <person name="Koo H.L."/>
            <person name="Kremenetskaia I."/>
            <person name="Kurtz D.B."/>
            <person name="Kwan A."/>
            <person name="Lam B."/>
            <person name="Langin-Hooper S."/>
            <person name="Lee A."/>
            <person name="Lee J.M."/>
            <person name="Lenz C.A."/>
            <person name="Li J.H."/>
            <person name="Li Y.-P."/>
            <person name="Lin X."/>
            <person name="Liu S.X."/>
            <person name="Liu Z.A."/>
            <person name="Luros J.S."/>
            <person name="Maiti R."/>
            <person name="Marziali A."/>
            <person name="Militscher J."/>
            <person name="Miranda M."/>
            <person name="Nguyen M."/>
            <person name="Nierman W.C."/>
            <person name="Osborne B.I."/>
            <person name="Pai G."/>
            <person name="Peterson J."/>
            <person name="Pham P.K."/>
            <person name="Rizzo M."/>
            <person name="Rooney T."/>
            <person name="Rowley D."/>
            <person name="Sakano H."/>
            <person name="Salzberg S.L."/>
            <person name="Schwartz J.R."/>
            <person name="Shinn P."/>
            <person name="Southwick A.M."/>
            <person name="Sun H."/>
            <person name="Tallon L.J."/>
            <person name="Tambunga G."/>
            <person name="Toriumi M.J."/>
            <person name="Town C.D."/>
            <person name="Utterback T."/>
            <person name="Van Aken S."/>
            <person name="Vaysberg M."/>
            <person name="Vysotskaia V.S."/>
            <person name="Walker M."/>
            <person name="Wu D."/>
            <person name="Yu G."/>
            <person name="Fraser C.M."/>
            <person name="Venter J.C."/>
            <person name="Davis R.W."/>
        </authorList>
    </citation>
    <scope>NUCLEOTIDE SEQUENCE [LARGE SCALE GENOMIC DNA]</scope>
    <source>
        <strain>cv. Columbia</strain>
    </source>
</reference>
<reference key="2">
    <citation type="journal article" date="2017" name="Plant J.">
        <title>Araport11: a complete reannotation of the Arabidopsis thaliana reference genome.</title>
        <authorList>
            <person name="Cheng C.Y."/>
            <person name="Krishnakumar V."/>
            <person name="Chan A.P."/>
            <person name="Thibaud-Nissen F."/>
            <person name="Schobel S."/>
            <person name="Town C.D."/>
        </authorList>
    </citation>
    <scope>GENOME REANNOTATION</scope>
    <source>
        <strain>cv. Columbia</strain>
    </source>
</reference>
<reference key="3">
    <citation type="journal article" date="1999" name="Plant Mol. Biol.">
        <title>Characterization of the Arabidopsis lecRK-a genes: members of a superfamily encoding putative receptors with an extracellular domain homologous to legume lectins.</title>
        <authorList>
            <person name="Herve C."/>
            <person name="Serres J."/>
            <person name="Dabos P."/>
            <person name="Canut H."/>
            <person name="Barre A."/>
            <person name="Rouge P."/>
            <person name="Lescure B."/>
        </authorList>
    </citation>
    <scope>GENE FAMILY</scope>
</reference>
<reference key="4">
    <citation type="journal article" date="2002" name="Crit. Rev. Plant Sci.">
        <title>Lectin receptor kinases in plants.</title>
        <authorList>
            <person name="Barre A."/>
            <person name="Herve C."/>
            <person name="Lescure B."/>
            <person name="Rouge P."/>
        </authorList>
    </citation>
    <scope>GENE FAMILY</scope>
</reference>
<reference key="5">
    <citation type="journal article" date="2009" name="J. Exp. Bot.">
        <title>Arabidopsis L-type lectin receptor kinases: phylogeny, classification, and expression profiles.</title>
        <authorList>
            <person name="Bouwmeester K."/>
            <person name="Govers F."/>
        </authorList>
    </citation>
    <scope>GENE FAMILY</scope>
    <scope>NOMENCLATURE</scope>
</reference>
<protein>
    <recommendedName>
        <fullName>Putative L-type lectin-domain containing receptor kinase V.2</fullName>
        <shortName>Arabidopsis thaliana lectin-receptor kinase b1</shortName>
        <shortName>AthlecRK-b1</shortName>
        <shortName>LecRK-V.2</shortName>
        <ecNumber>2.7.11.1</ecNumber>
    </recommendedName>
</protein>
<proteinExistence type="inferred from homology"/>